<organism>
    <name type="scientific">Actinobacillus pleuropneumoniae serotype 3 (strain JL03)</name>
    <dbReference type="NCBI Taxonomy" id="434271"/>
    <lineage>
        <taxon>Bacteria</taxon>
        <taxon>Pseudomonadati</taxon>
        <taxon>Pseudomonadota</taxon>
        <taxon>Gammaproteobacteria</taxon>
        <taxon>Pasteurellales</taxon>
        <taxon>Pasteurellaceae</taxon>
        <taxon>Actinobacillus</taxon>
    </lineage>
</organism>
<evidence type="ECO:0000255" key="1">
    <source>
        <dbReference type="HAMAP-Rule" id="MF_00196"/>
    </source>
</evidence>
<protein>
    <recommendedName>
        <fullName evidence="1">Mannitol-1-phosphate 5-dehydrogenase</fullName>
        <ecNumber evidence="1">1.1.1.17</ecNumber>
    </recommendedName>
</protein>
<keyword id="KW-0520">NAD</keyword>
<keyword id="KW-0560">Oxidoreductase</keyword>
<gene>
    <name evidence="1" type="primary">mtlD</name>
    <name type="ordered locus">APJL_1662</name>
</gene>
<dbReference type="EC" id="1.1.1.17" evidence="1"/>
<dbReference type="EMBL" id="CP000687">
    <property type="protein sequence ID" value="ABY70214.1"/>
    <property type="molecule type" value="Genomic_DNA"/>
</dbReference>
<dbReference type="RefSeq" id="WP_005599024.1">
    <property type="nucleotide sequence ID" value="NC_010278.1"/>
</dbReference>
<dbReference type="SMR" id="B0BRV5"/>
<dbReference type="KEGG" id="apj:APJL_1662"/>
<dbReference type="HOGENOM" id="CLU_036089_2_0_6"/>
<dbReference type="Proteomes" id="UP000008547">
    <property type="component" value="Chromosome"/>
</dbReference>
<dbReference type="GO" id="GO:0005829">
    <property type="term" value="C:cytosol"/>
    <property type="evidence" value="ECO:0007669"/>
    <property type="project" value="TreeGrafter"/>
</dbReference>
<dbReference type="GO" id="GO:0008926">
    <property type="term" value="F:mannitol-1-phosphate 5-dehydrogenase activity"/>
    <property type="evidence" value="ECO:0007669"/>
    <property type="project" value="UniProtKB-UniRule"/>
</dbReference>
<dbReference type="GO" id="GO:0019592">
    <property type="term" value="P:mannitol catabolic process"/>
    <property type="evidence" value="ECO:0007669"/>
    <property type="project" value="TreeGrafter"/>
</dbReference>
<dbReference type="FunFam" id="1.10.1040.10:FF:000009">
    <property type="entry name" value="Mannitol-1-phosphate 5-dehydrogenase"/>
    <property type="match status" value="1"/>
</dbReference>
<dbReference type="FunFam" id="3.40.50.720:FF:000075">
    <property type="entry name" value="Mannitol-1-phosphate 5-dehydrogenase"/>
    <property type="match status" value="1"/>
</dbReference>
<dbReference type="Gene3D" id="1.10.1040.10">
    <property type="entry name" value="N-(1-d-carboxylethyl)-l-norvaline Dehydrogenase, domain 2"/>
    <property type="match status" value="1"/>
</dbReference>
<dbReference type="Gene3D" id="3.40.50.720">
    <property type="entry name" value="NAD(P)-binding Rossmann-like Domain"/>
    <property type="match status" value="1"/>
</dbReference>
<dbReference type="HAMAP" id="MF_00196">
    <property type="entry name" value="Mannitol_dehydrog"/>
    <property type="match status" value="1"/>
</dbReference>
<dbReference type="InterPro" id="IPR008927">
    <property type="entry name" value="6-PGluconate_DH-like_C_sf"/>
</dbReference>
<dbReference type="InterPro" id="IPR013328">
    <property type="entry name" value="6PGD_dom2"/>
</dbReference>
<dbReference type="InterPro" id="IPR023028">
    <property type="entry name" value="Mannitol_1_phos_5_DH"/>
</dbReference>
<dbReference type="InterPro" id="IPR000669">
    <property type="entry name" value="Mannitol_DH"/>
</dbReference>
<dbReference type="InterPro" id="IPR013118">
    <property type="entry name" value="Mannitol_DH_C"/>
</dbReference>
<dbReference type="InterPro" id="IPR023027">
    <property type="entry name" value="Mannitol_DH_CS"/>
</dbReference>
<dbReference type="InterPro" id="IPR013131">
    <property type="entry name" value="Mannitol_DH_N"/>
</dbReference>
<dbReference type="InterPro" id="IPR036291">
    <property type="entry name" value="NAD(P)-bd_dom_sf"/>
</dbReference>
<dbReference type="NCBIfam" id="NF002646">
    <property type="entry name" value="PRK02318.1-2"/>
    <property type="match status" value="1"/>
</dbReference>
<dbReference type="NCBIfam" id="NF002647">
    <property type="entry name" value="PRK02318.1-3"/>
    <property type="match status" value="1"/>
</dbReference>
<dbReference type="NCBIfam" id="NF002650">
    <property type="entry name" value="PRK02318.2-2"/>
    <property type="match status" value="1"/>
</dbReference>
<dbReference type="NCBIfam" id="NF002652">
    <property type="entry name" value="PRK02318.2-5"/>
    <property type="match status" value="1"/>
</dbReference>
<dbReference type="PANTHER" id="PTHR30524:SF0">
    <property type="entry name" value="ALTRONATE OXIDOREDUCTASE-RELATED"/>
    <property type="match status" value="1"/>
</dbReference>
<dbReference type="PANTHER" id="PTHR30524">
    <property type="entry name" value="MANNITOL-1-PHOSPHATE 5-DEHYDROGENASE"/>
    <property type="match status" value="1"/>
</dbReference>
<dbReference type="Pfam" id="PF01232">
    <property type="entry name" value="Mannitol_dh"/>
    <property type="match status" value="1"/>
</dbReference>
<dbReference type="Pfam" id="PF08125">
    <property type="entry name" value="Mannitol_dh_C"/>
    <property type="match status" value="1"/>
</dbReference>
<dbReference type="PRINTS" id="PR00084">
    <property type="entry name" value="MTLDHDRGNASE"/>
</dbReference>
<dbReference type="SUPFAM" id="SSF48179">
    <property type="entry name" value="6-phosphogluconate dehydrogenase C-terminal domain-like"/>
    <property type="match status" value="1"/>
</dbReference>
<dbReference type="SUPFAM" id="SSF51735">
    <property type="entry name" value="NAD(P)-binding Rossmann-fold domains"/>
    <property type="match status" value="1"/>
</dbReference>
<dbReference type="PROSITE" id="PS00974">
    <property type="entry name" value="MANNITOL_DHGENASE"/>
    <property type="match status" value="1"/>
</dbReference>
<sequence>MNALHFGAGNIGRGFIGKLLADSGVFVTFADINQTQIDQINQNKQYGVKIVGDASRVEVVKNIAAINSKDEEAVIEQVKSVELITTAVGPNVLGFIAPLFAKALAARLEAGNTQPLNIIACENMVRGTSFFKAKIFENLTASQQAEIEKFVGFVDSAVDRIVPPAELNEADPLEVTVEEFSEWIVDKTQFKGQIPDIKGMELTDNLMAFVERKLFTLNTGHLISAYLGKQAGVKWIKEAIAIDSVKAAVKATMEESGAVLIKRYNFDPQAHAAYIEKILKRFANPYLNDDVNRVGREPIRKLSPNDRLIKPLLGTLEYGLPHKNLVNGVVMALQYRNEEDPQAVELAQFIADNGVAAAVEKYTGLTNQEVIDQVVALYN</sequence>
<reference key="1">
    <citation type="journal article" date="2008" name="PLoS ONE">
        <title>Genome biology of Actinobacillus pleuropneumoniae JL03, an isolate of serotype 3 prevalent in China.</title>
        <authorList>
            <person name="Xu Z."/>
            <person name="Zhou Y."/>
            <person name="Li L."/>
            <person name="Zhou R."/>
            <person name="Xiao S."/>
            <person name="Wan Y."/>
            <person name="Zhang S."/>
            <person name="Wang K."/>
            <person name="Li W."/>
            <person name="Li L."/>
            <person name="Jin H."/>
            <person name="Kang M."/>
            <person name="Dalai B."/>
            <person name="Li T."/>
            <person name="Liu L."/>
            <person name="Cheng Y."/>
            <person name="Zhang L."/>
            <person name="Xu T."/>
            <person name="Zheng H."/>
            <person name="Pu S."/>
            <person name="Wang B."/>
            <person name="Gu W."/>
            <person name="Zhang X.L."/>
            <person name="Zhu G.-F."/>
            <person name="Wang S."/>
            <person name="Zhao G.-P."/>
            <person name="Chen H."/>
        </authorList>
    </citation>
    <scope>NUCLEOTIDE SEQUENCE [LARGE SCALE GENOMIC DNA]</scope>
    <source>
        <strain>JL03</strain>
    </source>
</reference>
<proteinExistence type="inferred from homology"/>
<name>MTLD_ACTPJ</name>
<accession>B0BRV5</accession>
<feature type="chain" id="PRO_1000099187" description="Mannitol-1-phosphate 5-dehydrogenase">
    <location>
        <begin position="1"/>
        <end position="379"/>
    </location>
</feature>
<feature type="binding site" evidence="1">
    <location>
        <begin position="3"/>
        <end position="14"/>
    </location>
    <ligand>
        <name>NAD(+)</name>
        <dbReference type="ChEBI" id="CHEBI:57540"/>
    </ligand>
</feature>
<comment type="catalytic activity">
    <reaction evidence="1">
        <text>D-mannitol 1-phosphate + NAD(+) = beta-D-fructose 6-phosphate + NADH + H(+)</text>
        <dbReference type="Rhea" id="RHEA:19661"/>
        <dbReference type="ChEBI" id="CHEBI:15378"/>
        <dbReference type="ChEBI" id="CHEBI:57540"/>
        <dbReference type="ChEBI" id="CHEBI:57634"/>
        <dbReference type="ChEBI" id="CHEBI:57945"/>
        <dbReference type="ChEBI" id="CHEBI:61381"/>
        <dbReference type="EC" id="1.1.1.17"/>
    </reaction>
</comment>
<comment type="similarity">
    <text evidence="1">Belongs to the mannitol dehydrogenase family.</text>
</comment>